<proteinExistence type="inferred from homology"/>
<dbReference type="EC" id="1.1.1.49" evidence="1"/>
<dbReference type="EMBL" id="AF045609">
    <property type="protein sequence ID" value="AAD12043.1"/>
    <property type="molecule type" value="Genomic_DNA"/>
</dbReference>
<dbReference type="EMBL" id="AL591688">
    <property type="protein sequence ID" value="CAC45276.1"/>
    <property type="molecule type" value="Genomic_DNA"/>
</dbReference>
<dbReference type="RefSeq" id="NP_384810.1">
    <property type="nucleotide sequence ID" value="NC_003047.1"/>
</dbReference>
<dbReference type="RefSeq" id="WP_003527054.1">
    <property type="nucleotide sequence ID" value="NC_003047.1"/>
</dbReference>
<dbReference type="SMR" id="Q9Z3S2"/>
<dbReference type="EnsemblBacteria" id="CAC45276">
    <property type="protein sequence ID" value="CAC45276"/>
    <property type="gene ID" value="SMc03070"/>
</dbReference>
<dbReference type="GeneID" id="89575005"/>
<dbReference type="KEGG" id="sme:SMc03070"/>
<dbReference type="PATRIC" id="fig|266834.11.peg.2080"/>
<dbReference type="eggNOG" id="COG0364">
    <property type="taxonomic scope" value="Bacteria"/>
</dbReference>
<dbReference type="HOGENOM" id="CLU_013524_5_0_5"/>
<dbReference type="OrthoDB" id="9802739at2"/>
<dbReference type="UniPathway" id="UPA00115">
    <property type="reaction ID" value="UER00408"/>
</dbReference>
<dbReference type="Proteomes" id="UP000001976">
    <property type="component" value="Chromosome"/>
</dbReference>
<dbReference type="GO" id="GO:0005829">
    <property type="term" value="C:cytosol"/>
    <property type="evidence" value="ECO:0007669"/>
    <property type="project" value="TreeGrafter"/>
</dbReference>
<dbReference type="GO" id="GO:0004345">
    <property type="term" value="F:glucose-6-phosphate dehydrogenase activity"/>
    <property type="evidence" value="ECO:0007669"/>
    <property type="project" value="UniProtKB-UniRule"/>
</dbReference>
<dbReference type="GO" id="GO:0050661">
    <property type="term" value="F:NADP binding"/>
    <property type="evidence" value="ECO:0007669"/>
    <property type="project" value="UniProtKB-UniRule"/>
</dbReference>
<dbReference type="GO" id="GO:0006006">
    <property type="term" value="P:glucose metabolic process"/>
    <property type="evidence" value="ECO:0007669"/>
    <property type="project" value="UniProtKB-KW"/>
</dbReference>
<dbReference type="GO" id="GO:0009051">
    <property type="term" value="P:pentose-phosphate shunt, oxidative branch"/>
    <property type="evidence" value="ECO:0007669"/>
    <property type="project" value="TreeGrafter"/>
</dbReference>
<dbReference type="Gene3D" id="3.30.360.10">
    <property type="entry name" value="Dihydrodipicolinate Reductase, domain 2"/>
    <property type="match status" value="1"/>
</dbReference>
<dbReference type="Gene3D" id="3.40.50.720">
    <property type="entry name" value="NAD(P)-binding Rossmann-like Domain"/>
    <property type="match status" value="1"/>
</dbReference>
<dbReference type="HAMAP" id="MF_00966">
    <property type="entry name" value="G6PD"/>
    <property type="match status" value="1"/>
</dbReference>
<dbReference type="InterPro" id="IPR001282">
    <property type="entry name" value="G6P_DH"/>
</dbReference>
<dbReference type="InterPro" id="IPR019796">
    <property type="entry name" value="G6P_DH_AS"/>
</dbReference>
<dbReference type="InterPro" id="IPR022675">
    <property type="entry name" value="G6P_DH_C"/>
</dbReference>
<dbReference type="InterPro" id="IPR022674">
    <property type="entry name" value="G6P_DH_NAD-bd"/>
</dbReference>
<dbReference type="InterPro" id="IPR036291">
    <property type="entry name" value="NAD(P)-bd_dom_sf"/>
</dbReference>
<dbReference type="NCBIfam" id="NF009492">
    <property type="entry name" value="PRK12853.1-3"/>
    <property type="match status" value="1"/>
</dbReference>
<dbReference type="NCBIfam" id="TIGR00871">
    <property type="entry name" value="zwf"/>
    <property type="match status" value="1"/>
</dbReference>
<dbReference type="PANTHER" id="PTHR23429:SF0">
    <property type="entry name" value="GLUCOSE-6-PHOSPHATE 1-DEHYDROGENASE"/>
    <property type="match status" value="1"/>
</dbReference>
<dbReference type="PANTHER" id="PTHR23429">
    <property type="entry name" value="GLUCOSE-6-PHOSPHATE 1-DEHYDROGENASE G6PD"/>
    <property type="match status" value="1"/>
</dbReference>
<dbReference type="Pfam" id="PF02781">
    <property type="entry name" value="G6PD_C"/>
    <property type="match status" value="1"/>
</dbReference>
<dbReference type="Pfam" id="PF00479">
    <property type="entry name" value="G6PD_N"/>
    <property type="match status" value="1"/>
</dbReference>
<dbReference type="PIRSF" id="PIRSF000110">
    <property type="entry name" value="G6PD"/>
    <property type="match status" value="1"/>
</dbReference>
<dbReference type="PRINTS" id="PR00079">
    <property type="entry name" value="G6PDHDRGNASE"/>
</dbReference>
<dbReference type="SUPFAM" id="SSF55347">
    <property type="entry name" value="Glyceraldehyde-3-phosphate dehydrogenase-like, C-terminal domain"/>
    <property type="match status" value="1"/>
</dbReference>
<dbReference type="SUPFAM" id="SSF51735">
    <property type="entry name" value="NAD(P)-binding Rossmann-fold domains"/>
    <property type="match status" value="1"/>
</dbReference>
<dbReference type="PROSITE" id="PS00069">
    <property type="entry name" value="G6P_DEHYDROGENASE"/>
    <property type="match status" value="1"/>
</dbReference>
<feature type="chain" id="PRO_0000068132" description="Glucose-6-phosphate 1-dehydrogenase">
    <location>
        <begin position="1"/>
        <end position="491"/>
    </location>
</feature>
<feature type="active site" description="Proton acceptor" evidence="1">
    <location>
        <position position="242"/>
    </location>
</feature>
<feature type="binding site" evidence="1">
    <location>
        <position position="51"/>
    </location>
    <ligand>
        <name>NADP(+)</name>
        <dbReference type="ChEBI" id="CHEBI:58349"/>
    </ligand>
</feature>
<feature type="binding site" evidence="1">
    <location>
        <position position="150"/>
    </location>
    <ligand>
        <name>NADP(+)</name>
        <dbReference type="ChEBI" id="CHEBI:58349"/>
    </ligand>
</feature>
<feature type="binding site" evidence="1">
    <location>
        <position position="180"/>
    </location>
    <ligand>
        <name>substrate</name>
    </ligand>
</feature>
<feature type="binding site" evidence="1">
    <location>
        <position position="184"/>
    </location>
    <ligand>
        <name>substrate</name>
    </ligand>
</feature>
<feature type="binding site" evidence="1">
    <location>
        <position position="218"/>
    </location>
    <ligand>
        <name>substrate</name>
    </ligand>
</feature>
<feature type="binding site" evidence="1">
    <location>
        <position position="237"/>
    </location>
    <ligand>
        <name>substrate</name>
    </ligand>
</feature>
<feature type="binding site" evidence="1">
    <location>
        <position position="341"/>
    </location>
    <ligand>
        <name>substrate</name>
    </ligand>
</feature>
<feature type="sequence conflict" description="In Ref. 1; AAD12043." evidence="2" ref="1">
    <original>R</original>
    <variation>T</variation>
    <location>
        <position position="401"/>
    </location>
</feature>
<comment type="function">
    <text evidence="1">Catalyzes the oxidation of glucose 6-phosphate to 6-phosphogluconolactone.</text>
</comment>
<comment type="catalytic activity">
    <reaction evidence="1">
        <text>D-glucose 6-phosphate + NADP(+) = 6-phospho-D-glucono-1,5-lactone + NADPH + H(+)</text>
        <dbReference type="Rhea" id="RHEA:15841"/>
        <dbReference type="ChEBI" id="CHEBI:15378"/>
        <dbReference type="ChEBI" id="CHEBI:57783"/>
        <dbReference type="ChEBI" id="CHEBI:57955"/>
        <dbReference type="ChEBI" id="CHEBI:58349"/>
        <dbReference type="ChEBI" id="CHEBI:61548"/>
        <dbReference type="EC" id="1.1.1.49"/>
    </reaction>
</comment>
<comment type="pathway">
    <text evidence="1">Carbohydrate degradation; pentose phosphate pathway; D-ribulose 5-phosphate from D-glucose 6-phosphate (oxidative stage): step 1/3.</text>
</comment>
<comment type="similarity">
    <text evidence="1">Belongs to the glucose-6-phosphate dehydrogenase family.</text>
</comment>
<name>G6PD_RHIME</name>
<reference key="1">
    <citation type="journal article" date="1999" name="J. Bacteriol.">
        <title>A novel Sinorhizobium meliloti operon encodes an alpha-glucosidase and a periplasmic-binding-protein-dependent transport system for alpha-glucosides.</title>
        <authorList>
            <person name="Willis L.B."/>
            <person name="Walker G.C."/>
        </authorList>
    </citation>
    <scope>NUCLEOTIDE SEQUENCE [GENOMIC DNA]</scope>
</reference>
<reference key="2">
    <citation type="journal article" date="2001" name="Proc. Natl. Acad. Sci. U.S.A.">
        <title>Analysis of the chromosome sequence of the legume symbiont Sinorhizobium meliloti strain 1021.</title>
        <authorList>
            <person name="Capela D."/>
            <person name="Barloy-Hubler F."/>
            <person name="Gouzy J."/>
            <person name="Bothe G."/>
            <person name="Ampe F."/>
            <person name="Batut J."/>
            <person name="Boistard P."/>
            <person name="Becker A."/>
            <person name="Boutry M."/>
            <person name="Cadieu E."/>
            <person name="Dreano S."/>
            <person name="Gloux S."/>
            <person name="Godrie T."/>
            <person name="Goffeau A."/>
            <person name="Kahn D."/>
            <person name="Kiss E."/>
            <person name="Lelaure V."/>
            <person name="Masuy D."/>
            <person name="Pohl T."/>
            <person name="Portetelle D."/>
            <person name="Puehler A."/>
            <person name="Purnelle B."/>
            <person name="Ramsperger U."/>
            <person name="Renard C."/>
            <person name="Thebault P."/>
            <person name="Vandenbol M."/>
            <person name="Weidner S."/>
            <person name="Galibert F."/>
        </authorList>
    </citation>
    <scope>NUCLEOTIDE SEQUENCE [LARGE SCALE GENOMIC DNA]</scope>
    <source>
        <strain>1021</strain>
    </source>
</reference>
<reference key="3">
    <citation type="journal article" date="2001" name="Science">
        <title>The composite genome of the legume symbiont Sinorhizobium meliloti.</title>
        <authorList>
            <person name="Galibert F."/>
            <person name="Finan T.M."/>
            <person name="Long S.R."/>
            <person name="Puehler A."/>
            <person name="Abola P."/>
            <person name="Ampe F."/>
            <person name="Barloy-Hubler F."/>
            <person name="Barnett M.J."/>
            <person name="Becker A."/>
            <person name="Boistard P."/>
            <person name="Bothe G."/>
            <person name="Boutry M."/>
            <person name="Bowser L."/>
            <person name="Buhrmester J."/>
            <person name="Cadieu E."/>
            <person name="Capela D."/>
            <person name="Chain P."/>
            <person name="Cowie A."/>
            <person name="Davis R.W."/>
            <person name="Dreano S."/>
            <person name="Federspiel N.A."/>
            <person name="Fisher R.F."/>
            <person name="Gloux S."/>
            <person name="Godrie T."/>
            <person name="Goffeau A."/>
            <person name="Golding B."/>
            <person name="Gouzy J."/>
            <person name="Gurjal M."/>
            <person name="Hernandez-Lucas I."/>
            <person name="Hong A."/>
            <person name="Huizar L."/>
            <person name="Hyman R.W."/>
            <person name="Jones T."/>
            <person name="Kahn D."/>
            <person name="Kahn M.L."/>
            <person name="Kalman S."/>
            <person name="Keating D.H."/>
            <person name="Kiss E."/>
            <person name="Komp C."/>
            <person name="Lelaure V."/>
            <person name="Masuy D."/>
            <person name="Palm C."/>
            <person name="Peck M.C."/>
            <person name="Pohl T.M."/>
            <person name="Portetelle D."/>
            <person name="Purnelle B."/>
            <person name="Ramsperger U."/>
            <person name="Surzycki R."/>
            <person name="Thebault P."/>
            <person name="Vandenbol M."/>
            <person name="Vorhoelter F.J."/>
            <person name="Weidner S."/>
            <person name="Wells D.H."/>
            <person name="Wong K."/>
            <person name="Yeh K.-C."/>
            <person name="Batut J."/>
        </authorList>
    </citation>
    <scope>NUCLEOTIDE SEQUENCE [LARGE SCALE GENOMIC DNA]</scope>
    <source>
        <strain>1021</strain>
    </source>
</reference>
<sequence>MSSQIIPVEPFDYVVFGGTGDLAERKLLPALYHRQMEGQFTEPTRIIGASRASLSHDEYRRFASDALKEHLKSGEFNEAEVEKFTSRLYYVSVDAKSEQGWDDLKKLLEEGKDRTRAFYLAVGPAIFSDISEKIRDHKLITRNTRIVVEKPIGRDLASATELNDTIGKVFREEQIFRIDHYLGKETVQNLMALRFANALYEPLWNSAHIDHVQITVSEAVGLENRAGYYDKAGALRDMVQNHILQLLCFVAMEAPTSMDAEAVRDEKLKVLRALKPITASNVEQVTVRGQYRAGASSGGPVKGYLEELEGGVSNTETFVAIKAEISNWRWAGVPFYLRTGKRMAGRMSEIVITFKQIPHSIFDQSAGRISANQLMIRLQPNEGVKQSLMIKDPGPGGMRLRNVPLDMSFAEAFAVRNADAYERLLLDVIRNNQTLFVRRDEVEAAWQWIDPILKAWEATGQQVQGYTAGTWGPSQSIALIERDGRTWNDAI</sequence>
<protein>
    <recommendedName>
        <fullName evidence="1">Glucose-6-phosphate 1-dehydrogenase</fullName>
        <shortName evidence="1">G6PD</shortName>
        <ecNumber evidence="1">1.1.1.49</ecNumber>
    </recommendedName>
</protein>
<gene>
    <name evidence="1" type="primary">zwf</name>
    <name type="ordered locus">R00704</name>
    <name type="ORF">SMc03070</name>
</gene>
<keyword id="KW-0119">Carbohydrate metabolism</keyword>
<keyword id="KW-0313">Glucose metabolism</keyword>
<keyword id="KW-0521">NADP</keyword>
<keyword id="KW-0560">Oxidoreductase</keyword>
<keyword id="KW-1185">Reference proteome</keyword>
<evidence type="ECO:0000255" key="1">
    <source>
        <dbReference type="HAMAP-Rule" id="MF_00966"/>
    </source>
</evidence>
<evidence type="ECO:0000305" key="2"/>
<accession>Q9Z3S2</accession>
<organism>
    <name type="scientific">Rhizobium meliloti (strain 1021)</name>
    <name type="common">Ensifer meliloti</name>
    <name type="synonym">Sinorhizobium meliloti</name>
    <dbReference type="NCBI Taxonomy" id="266834"/>
    <lineage>
        <taxon>Bacteria</taxon>
        <taxon>Pseudomonadati</taxon>
        <taxon>Pseudomonadota</taxon>
        <taxon>Alphaproteobacteria</taxon>
        <taxon>Hyphomicrobiales</taxon>
        <taxon>Rhizobiaceae</taxon>
        <taxon>Sinorhizobium/Ensifer group</taxon>
        <taxon>Sinorhizobium</taxon>
    </lineage>
</organism>